<accession>B7IXT0</accession>
<name>RBSD_BACC2</name>
<organism>
    <name type="scientific">Bacillus cereus (strain G9842)</name>
    <dbReference type="NCBI Taxonomy" id="405531"/>
    <lineage>
        <taxon>Bacteria</taxon>
        <taxon>Bacillati</taxon>
        <taxon>Bacillota</taxon>
        <taxon>Bacilli</taxon>
        <taxon>Bacillales</taxon>
        <taxon>Bacillaceae</taxon>
        <taxon>Bacillus</taxon>
        <taxon>Bacillus cereus group</taxon>
    </lineage>
</organism>
<sequence length="131" mass="14269">MKKHGVLNSEIAAVLASLGHTDTVVIADCGLPIPDGVKRIDLAVEIGKPSFLEVLQVVADDMAIEKVTLAEEVIINNAEVNKEIEQKLIEPAFEYVSHEQFKEHTKKAKAIIRTGEATPYANVILHAGVIF</sequence>
<protein>
    <recommendedName>
        <fullName evidence="1">D-ribose pyranase</fullName>
        <ecNumber evidence="1">5.4.99.62</ecNumber>
    </recommendedName>
</protein>
<reference key="1">
    <citation type="submission" date="2008-10" db="EMBL/GenBank/DDBJ databases">
        <title>Genome sequence of Bacillus cereus G9842.</title>
        <authorList>
            <person name="Dodson R.J."/>
            <person name="Durkin A.S."/>
            <person name="Rosovitz M.J."/>
            <person name="Rasko D.A."/>
            <person name="Hoffmaster A."/>
            <person name="Ravel J."/>
            <person name="Sutton G."/>
        </authorList>
    </citation>
    <scope>NUCLEOTIDE SEQUENCE [LARGE SCALE GENOMIC DNA]</scope>
    <source>
        <strain>G9842</strain>
    </source>
</reference>
<evidence type="ECO:0000255" key="1">
    <source>
        <dbReference type="HAMAP-Rule" id="MF_01661"/>
    </source>
</evidence>
<gene>
    <name evidence="1" type="primary">rbsD</name>
    <name type="ordered locus">BCG9842_B4640</name>
</gene>
<comment type="function">
    <text evidence="1">Catalyzes the interconversion of beta-pyran and beta-furan forms of D-ribose.</text>
</comment>
<comment type="catalytic activity">
    <reaction evidence="1">
        <text>beta-D-ribopyranose = beta-D-ribofuranose</text>
        <dbReference type="Rhea" id="RHEA:25432"/>
        <dbReference type="ChEBI" id="CHEBI:27476"/>
        <dbReference type="ChEBI" id="CHEBI:47002"/>
        <dbReference type="EC" id="5.4.99.62"/>
    </reaction>
</comment>
<comment type="pathway">
    <text evidence="1">Carbohydrate metabolism; D-ribose degradation; D-ribose 5-phosphate from beta-D-ribopyranose: step 1/2.</text>
</comment>
<comment type="subunit">
    <text evidence="1">Homodecamer.</text>
</comment>
<comment type="subcellular location">
    <subcellularLocation>
        <location evidence="1">Cytoplasm</location>
    </subcellularLocation>
</comment>
<comment type="similarity">
    <text evidence="1">Belongs to the RbsD / FucU family. RbsD subfamily.</text>
</comment>
<proteinExistence type="inferred from homology"/>
<keyword id="KW-0119">Carbohydrate metabolism</keyword>
<keyword id="KW-0963">Cytoplasm</keyword>
<keyword id="KW-0413">Isomerase</keyword>
<dbReference type="EC" id="5.4.99.62" evidence="1"/>
<dbReference type="EMBL" id="CP001186">
    <property type="protein sequence ID" value="ACK95026.1"/>
    <property type="molecule type" value="Genomic_DNA"/>
</dbReference>
<dbReference type="RefSeq" id="WP_000716151.1">
    <property type="nucleotide sequence ID" value="NC_011772.1"/>
</dbReference>
<dbReference type="SMR" id="B7IXT0"/>
<dbReference type="GeneID" id="72447468"/>
<dbReference type="KEGG" id="bcg:BCG9842_B4640"/>
<dbReference type="HOGENOM" id="CLU_135498_0_0_9"/>
<dbReference type="UniPathway" id="UPA00916">
    <property type="reaction ID" value="UER00888"/>
</dbReference>
<dbReference type="Proteomes" id="UP000006744">
    <property type="component" value="Chromosome"/>
</dbReference>
<dbReference type="GO" id="GO:0005829">
    <property type="term" value="C:cytosol"/>
    <property type="evidence" value="ECO:0007669"/>
    <property type="project" value="TreeGrafter"/>
</dbReference>
<dbReference type="GO" id="GO:0062193">
    <property type="term" value="F:D-ribose pyranase activity"/>
    <property type="evidence" value="ECO:0007669"/>
    <property type="project" value="UniProtKB-EC"/>
</dbReference>
<dbReference type="GO" id="GO:0016872">
    <property type="term" value="F:intramolecular lyase activity"/>
    <property type="evidence" value="ECO:0007669"/>
    <property type="project" value="UniProtKB-UniRule"/>
</dbReference>
<dbReference type="GO" id="GO:0048029">
    <property type="term" value="F:monosaccharide binding"/>
    <property type="evidence" value="ECO:0007669"/>
    <property type="project" value="InterPro"/>
</dbReference>
<dbReference type="GO" id="GO:0019303">
    <property type="term" value="P:D-ribose catabolic process"/>
    <property type="evidence" value="ECO:0007669"/>
    <property type="project" value="UniProtKB-UniRule"/>
</dbReference>
<dbReference type="FunFam" id="3.40.1650.10:FF:000003">
    <property type="entry name" value="D-ribose pyranase"/>
    <property type="match status" value="1"/>
</dbReference>
<dbReference type="Gene3D" id="3.40.1650.10">
    <property type="entry name" value="RbsD-like domain"/>
    <property type="match status" value="1"/>
</dbReference>
<dbReference type="HAMAP" id="MF_01661">
    <property type="entry name" value="D_rib_pyranase"/>
    <property type="match status" value="1"/>
</dbReference>
<dbReference type="InterPro" id="IPR023064">
    <property type="entry name" value="D-ribose_pyranase"/>
</dbReference>
<dbReference type="InterPro" id="IPR023750">
    <property type="entry name" value="RbsD-like_sf"/>
</dbReference>
<dbReference type="InterPro" id="IPR007721">
    <property type="entry name" value="RbsD_FucU"/>
</dbReference>
<dbReference type="NCBIfam" id="NF008761">
    <property type="entry name" value="PRK11797.1"/>
    <property type="match status" value="1"/>
</dbReference>
<dbReference type="PANTHER" id="PTHR37831">
    <property type="entry name" value="D-RIBOSE PYRANASE"/>
    <property type="match status" value="1"/>
</dbReference>
<dbReference type="PANTHER" id="PTHR37831:SF1">
    <property type="entry name" value="D-RIBOSE PYRANASE"/>
    <property type="match status" value="1"/>
</dbReference>
<dbReference type="Pfam" id="PF05025">
    <property type="entry name" value="RbsD_FucU"/>
    <property type="match status" value="1"/>
</dbReference>
<dbReference type="SUPFAM" id="SSF102546">
    <property type="entry name" value="RbsD-like"/>
    <property type="match status" value="1"/>
</dbReference>
<feature type="chain" id="PRO_1000187131" description="D-ribose pyranase">
    <location>
        <begin position="1"/>
        <end position="131"/>
    </location>
</feature>
<feature type="active site" description="Proton donor" evidence="1">
    <location>
        <position position="20"/>
    </location>
</feature>
<feature type="binding site" evidence="1">
    <location>
        <position position="28"/>
    </location>
    <ligand>
        <name>substrate</name>
    </ligand>
</feature>
<feature type="binding site" evidence="1">
    <location>
        <position position="98"/>
    </location>
    <ligand>
        <name>substrate</name>
    </ligand>
</feature>
<feature type="binding site" evidence="1">
    <location>
        <begin position="120"/>
        <end position="122"/>
    </location>
    <ligand>
        <name>substrate</name>
    </ligand>
</feature>